<accession>Q8Y822</accession>
<keyword id="KW-0067">ATP-binding</keyword>
<keyword id="KW-0315">Glutamine amidotransferase</keyword>
<keyword id="KW-0332">GMP biosynthesis</keyword>
<keyword id="KW-0436">Ligase</keyword>
<keyword id="KW-0547">Nucleotide-binding</keyword>
<keyword id="KW-0658">Purine biosynthesis</keyword>
<keyword id="KW-1185">Reference proteome</keyword>
<evidence type="ECO:0000255" key="1">
    <source>
        <dbReference type="HAMAP-Rule" id="MF_00344"/>
    </source>
</evidence>
<comment type="function">
    <text evidence="1">Catalyzes the synthesis of GMP from XMP.</text>
</comment>
<comment type="catalytic activity">
    <reaction evidence="1">
        <text>XMP + L-glutamine + ATP + H2O = GMP + L-glutamate + AMP + diphosphate + 2 H(+)</text>
        <dbReference type="Rhea" id="RHEA:11680"/>
        <dbReference type="ChEBI" id="CHEBI:15377"/>
        <dbReference type="ChEBI" id="CHEBI:15378"/>
        <dbReference type="ChEBI" id="CHEBI:29985"/>
        <dbReference type="ChEBI" id="CHEBI:30616"/>
        <dbReference type="ChEBI" id="CHEBI:33019"/>
        <dbReference type="ChEBI" id="CHEBI:57464"/>
        <dbReference type="ChEBI" id="CHEBI:58115"/>
        <dbReference type="ChEBI" id="CHEBI:58359"/>
        <dbReference type="ChEBI" id="CHEBI:456215"/>
        <dbReference type="EC" id="6.3.5.2"/>
    </reaction>
</comment>
<comment type="pathway">
    <text evidence="1">Purine metabolism; GMP biosynthesis; GMP from XMP (L-Gln route): step 1/1.</text>
</comment>
<comment type="subunit">
    <text evidence="1">Homodimer.</text>
</comment>
<protein>
    <recommendedName>
        <fullName evidence="1">GMP synthase [glutamine-hydrolyzing]</fullName>
        <ecNumber evidence="1">6.3.5.2</ecNumber>
    </recommendedName>
    <alternativeName>
        <fullName evidence="1">GMP synthetase</fullName>
    </alternativeName>
    <alternativeName>
        <fullName evidence="1">Glutamine amidotransferase</fullName>
    </alternativeName>
</protein>
<organism>
    <name type="scientific">Listeria monocytogenes serovar 1/2a (strain ATCC BAA-679 / EGD-e)</name>
    <dbReference type="NCBI Taxonomy" id="169963"/>
    <lineage>
        <taxon>Bacteria</taxon>
        <taxon>Bacillati</taxon>
        <taxon>Bacillota</taxon>
        <taxon>Bacilli</taxon>
        <taxon>Bacillales</taxon>
        <taxon>Listeriaceae</taxon>
        <taxon>Listeria</taxon>
    </lineage>
</organism>
<reference key="1">
    <citation type="journal article" date="2001" name="Science">
        <title>Comparative genomics of Listeria species.</title>
        <authorList>
            <person name="Glaser P."/>
            <person name="Frangeul L."/>
            <person name="Buchrieser C."/>
            <person name="Rusniok C."/>
            <person name="Amend A."/>
            <person name="Baquero F."/>
            <person name="Berche P."/>
            <person name="Bloecker H."/>
            <person name="Brandt P."/>
            <person name="Chakraborty T."/>
            <person name="Charbit A."/>
            <person name="Chetouani F."/>
            <person name="Couve E."/>
            <person name="de Daruvar A."/>
            <person name="Dehoux P."/>
            <person name="Domann E."/>
            <person name="Dominguez-Bernal G."/>
            <person name="Duchaud E."/>
            <person name="Durant L."/>
            <person name="Dussurget O."/>
            <person name="Entian K.-D."/>
            <person name="Fsihi H."/>
            <person name="Garcia-del Portillo F."/>
            <person name="Garrido P."/>
            <person name="Gautier L."/>
            <person name="Goebel W."/>
            <person name="Gomez-Lopez N."/>
            <person name="Hain T."/>
            <person name="Hauf J."/>
            <person name="Jackson D."/>
            <person name="Jones L.-M."/>
            <person name="Kaerst U."/>
            <person name="Kreft J."/>
            <person name="Kuhn M."/>
            <person name="Kunst F."/>
            <person name="Kurapkat G."/>
            <person name="Madueno E."/>
            <person name="Maitournam A."/>
            <person name="Mata Vicente J."/>
            <person name="Ng E."/>
            <person name="Nedjari H."/>
            <person name="Nordsiek G."/>
            <person name="Novella S."/>
            <person name="de Pablos B."/>
            <person name="Perez-Diaz J.-C."/>
            <person name="Purcell R."/>
            <person name="Remmel B."/>
            <person name="Rose M."/>
            <person name="Schlueter T."/>
            <person name="Simoes N."/>
            <person name="Tierrez A."/>
            <person name="Vazquez-Boland J.-A."/>
            <person name="Voss H."/>
            <person name="Wehland J."/>
            <person name="Cossart P."/>
        </authorList>
    </citation>
    <scope>NUCLEOTIDE SEQUENCE [LARGE SCALE GENOMIC DNA]</scope>
    <source>
        <strain>ATCC BAA-679 / EGD-e</strain>
    </source>
</reference>
<proteinExistence type="inferred from homology"/>
<name>GUAA_LISMO</name>
<dbReference type="EC" id="6.3.5.2" evidence="1"/>
<dbReference type="EMBL" id="AL591977">
    <property type="protein sequence ID" value="CAC99174.1"/>
    <property type="molecule type" value="Genomic_DNA"/>
</dbReference>
<dbReference type="PIR" id="AH1211">
    <property type="entry name" value="AH1211"/>
</dbReference>
<dbReference type="RefSeq" id="NP_464621.1">
    <property type="nucleotide sequence ID" value="NC_003210.1"/>
</dbReference>
<dbReference type="RefSeq" id="WP_010989661.1">
    <property type="nucleotide sequence ID" value="NZ_CP149495.1"/>
</dbReference>
<dbReference type="SMR" id="Q8Y822"/>
<dbReference type="STRING" id="169963.gene:17593752"/>
<dbReference type="MEROPS" id="C26.957"/>
<dbReference type="PaxDb" id="169963-lmo1096"/>
<dbReference type="EnsemblBacteria" id="CAC99174">
    <property type="protein sequence ID" value="CAC99174"/>
    <property type="gene ID" value="CAC99174"/>
</dbReference>
<dbReference type="GeneID" id="986238"/>
<dbReference type="KEGG" id="lmo:lmo1096"/>
<dbReference type="PATRIC" id="fig|169963.11.peg.1126"/>
<dbReference type="eggNOG" id="COG0518">
    <property type="taxonomic scope" value="Bacteria"/>
</dbReference>
<dbReference type="eggNOG" id="COG0519">
    <property type="taxonomic scope" value="Bacteria"/>
</dbReference>
<dbReference type="HOGENOM" id="CLU_014340_0_5_9"/>
<dbReference type="OrthoDB" id="9802219at2"/>
<dbReference type="PhylomeDB" id="Q8Y822"/>
<dbReference type="BioCyc" id="LMON169963:LMO1096-MONOMER"/>
<dbReference type="UniPathway" id="UPA00189">
    <property type="reaction ID" value="UER00296"/>
</dbReference>
<dbReference type="Proteomes" id="UP000000817">
    <property type="component" value="Chromosome"/>
</dbReference>
<dbReference type="GO" id="GO:0005829">
    <property type="term" value="C:cytosol"/>
    <property type="evidence" value="ECO:0000318"/>
    <property type="project" value="GO_Central"/>
</dbReference>
<dbReference type="GO" id="GO:0005524">
    <property type="term" value="F:ATP binding"/>
    <property type="evidence" value="ECO:0007669"/>
    <property type="project" value="UniProtKB-UniRule"/>
</dbReference>
<dbReference type="GO" id="GO:0003921">
    <property type="term" value="F:GMP synthase activity"/>
    <property type="evidence" value="ECO:0000318"/>
    <property type="project" value="GO_Central"/>
</dbReference>
<dbReference type="GO" id="GO:0006177">
    <property type="term" value="P:GMP biosynthetic process"/>
    <property type="evidence" value="ECO:0000318"/>
    <property type="project" value="GO_Central"/>
</dbReference>
<dbReference type="CDD" id="cd01742">
    <property type="entry name" value="GATase1_GMP_Synthase"/>
    <property type="match status" value="1"/>
</dbReference>
<dbReference type="CDD" id="cd01997">
    <property type="entry name" value="GMP_synthase_C"/>
    <property type="match status" value="1"/>
</dbReference>
<dbReference type="FunFam" id="3.30.300.10:FF:000002">
    <property type="entry name" value="GMP synthase [glutamine-hydrolyzing]"/>
    <property type="match status" value="1"/>
</dbReference>
<dbReference type="FunFam" id="3.40.50.620:FF:000001">
    <property type="entry name" value="GMP synthase [glutamine-hydrolyzing]"/>
    <property type="match status" value="1"/>
</dbReference>
<dbReference type="FunFam" id="3.40.50.880:FF:000001">
    <property type="entry name" value="GMP synthase [glutamine-hydrolyzing]"/>
    <property type="match status" value="1"/>
</dbReference>
<dbReference type="Gene3D" id="3.30.300.10">
    <property type="match status" value="1"/>
</dbReference>
<dbReference type="Gene3D" id="3.40.50.880">
    <property type="match status" value="1"/>
</dbReference>
<dbReference type="Gene3D" id="3.40.50.620">
    <property type="entry name" value="HUPs"/>
    <property type="match status" value="1"/>
</dbReference>
<dbReference type="HAMAP" id="MF_00344">
    <property type="entry name" value="GMP_synthase"/>
    <property type="match status" value="1"/>
</dbReference>
<dbReference type="InterPro" id="IPR029062">
    <property type="entry name" value="Class_I_gatase-like"/>
</dbReference>
<dbReference type="InterPro" id="IPR017926">
    <property type="entry name" value="GATASE"/>
</dbReference>
<dbReference type="InterPro" id="IPR001674">
    <property type="entry name" value="GMP_synth_C"/>
</dbReference>
<dbReference type="InterPro" id="IPR004739">
    <property type="entry name" value="GMP_synth_GATase"/>
</dbReference>
<dbReference type="InterPro" id="IPR022955">
    <property type="entry name" value="GMP_synthase"/>
</dbReference>
<dbReference type="InterPro" id="IPR025777">
    <property type="entry name" value="GMPS_ATP_PPase_dom"/>
</dbReference>
<dbReference type="InterPro" id="IPR022310">
    <property type="entry name" value="NAD/GMP_synthase"/>
</dbReference>
<dbReference type="InterPro" id="IPR014729">
    <property type="entry name" value="Rossmann-like_a/b/a_fold"/>
</dbReference>
<dbReference type="NCBIfam" id="TIGR00884">
    <property type="entry name" value="guaA_Cterm"/>
    <property type="match status" value="1"/>
</dbReference>
<dbReference type="NCBIfam" id="TIGR00888">
    <property type="entry name" value="guaA_Nterm"/>
    <property type="match status" value="1"/>
</dbReference>
<dbReference type="NCBIfam" id="NF000848">
    <property type="entry name" value="PRK00074.1"/>
    <property type="match status" value="1"/>
</dbReference>
<dbReference type="PANTHER" id="PTHR11922:SF2">
    <property type="entry name" value="GMP SYNTHASE [GLUTAMINE-HYDROLYZING]"/>
    <property type="match status" value="1"/>
</dbReference>
<dbReference type="PANTHER" id="PTHR11922">
    <property type="entry name" value="GMP SYNTHASE-RELATED"/>
    <property type="match status" value="1"/>
</dbReference>
<dbReference type="Pfam" id="PF00117">
    <property type="entry name" value="GATase"/>
    <property type="match status" value="1"/>
</dbReference>
<dbReference type="Pfam" id="PF00958">
    <property type="entry name" value="GMP_synt_C"/>
    <property type="match status" value="1"/>
</dbReference>
<dbReference type="Pfam" id="PF02540">
    <property type="entry name" value="NAD_synthase"/>
    <property type="match status" value="1"/>
</dbReference>
<dbReference type="PRINTS" id="PR00097">
    <property type="entry name" value="ANTSNTHASEII"/>
</dbReference>
<dbReference type="PRINTS" id="PR00099">
    <property type="entry name" value="CPSGATASE"/>
</dbReference>
<dbReference type="PRINTS" id="PR00096">
    <property type="entry name" value="GATASE"/>
</dbReference>
<dbReference type="SUPFAM" id="SSF52402">
    <property type="entry name" value="Adenine nucleotide alpha hydrolases-like"/>
    <property type="match status" value="1"/>
</dbReference>
<dbReference type="SUPFAM" id="SSF52317">
    <property type="entry name" value="Class I glutamine amidotransferase-like"/>
    <property type="match status" value="1"/>
</dbReference>
<dbReference type="SUPFAM" id="SSF54810">
    <property type="entry name" value="GMP synthetase C-terminal dimerisation domain"/>
    <property type="match status" value="1"/>
</dbReference>
<dbReference type="PROSITE" id="PS51273">
    <property type="entry name" value="GATASE_TYPE_1"/>
    <property type="match status" value="1"/>
</dbReference>
<dbReference type="PROSITE" id="PS51553">
    <property type="entry name" value="GMPS_ATP_PPASE"/>
    <property type="match status" value="1"/>
</dbReference>
<feature type="chain" id="PRO_0000140145" description="GMP synthase [glutamine-hydrolyzing]">
    <location>
        <begin position="1"/>
        <end position="518"/>
    </location>
</feature>
<feature type="domain" description="Glutamine amidotransferase type-1" evidence="1">
    <location>
        <begin position="13"/>
        <end position="203"/>
    </location>
</feature>
<feature type="domain" description="GMPS ATP-PPase" evidence="1">
    <location>
        <begin position="204"/>
        <end position="393"/>
    </location>
</feature>
<feature type="active site" description="Nucleophile" evidence="1">
    <location>
        <position position="90"/>
    </location>
</feature>
<feature type="active site" evidence="1">
    <location>
        <position position="177"/>
    </location>
</feature>
<feature type="active site" evidence="1">
    <location>
        <position position="179"/>
    </location>
</feature>
<feature type="binding site" evidence="1">
    <location>
        <begin position="231"/>
        <end position="237"/>
    </location>
    <ligand>
        <name>ATP</name>
        <dbReference type="ChEBI" id="CHEBI:30616"/>
    </ligand>
</feature>
<sequence length="518" mass="58114">MFKIMKDFTEQEKIIVLDFGSQYNQLITRRIREFGVYSELHPHTITVEEMKALNPTGIIFSGGPNSVYDEDAFRADERIFDMGIPILGICYGMQLMTTHFGGKVERAKDREYGKADIHVEKPNRLFAGLPTDQVVWMSHGDLVVEEPAGFEVTVTSKSCPIAGIADEERSLYGVQFHPEVRHSVYGNELLKNFALNVCGCKGDWTMENFSEVEIAKIQEIVGDKKVLLALSGGVDSSVVGVLIHKAIGDQLTCIFVDHGLLRKGEADQVMETLQGEFNMNIIKVDAKKRFMDKLAGVSDPEQKRKIIGNEFIYVFDDEANKLDGVEFLAQGTLYTDIIESGTATAQTIKSHHNVGGLPEDMQFKLIEPLNTLFKDEVRALGTELGMPDAIVWRQPFPGPGLGIRVLGEITEEKLEIVRDSDYILREEIKNAGLEREIWQYFTALPNIRSVGVMGDGRTYDHTVVVRAVTSIDGMTADWARIPWDVLEKISVRIVNEVDHVNRVVYDITSKPPATVEWE</sequence>
<gene>
    <name evidence="1" type="primary">guaA</name>
    <name type="ordered locus">lmo1096</name>
</gene>